<accession>Q472G1</accession>
<dbReference type="EC" id="2.8.4.4" evidence="1"/>
<dbReference type="EMBL" id="CP000090">
    <property type="protein sequence ID" value="AAZ60722.1"/>
    <property type="molecule type" value="Genomic_DNA"/>
</dbReference>
<dbReference type="SMR" id="Q472G1"/>
<dbReference type="STRING" id="264198.Reut_A1352"/>
<dbReference type="KEGG" id="reu:Reut_A1352"/>
<dbReference type="eggNOG" id="COG0621">
    <property type="taxonomic scope" value="Bacteria"/>
</dbReference>
<dbReference type="HOGENOM" id="CLU_018697_0_0_4"/>
<dbReference type="OrthoDB" id="9805215at2"/>
<dbReference type="GO" id="GO:0005829">
    <property type="term" value="C:cytosol"/>
    <property type="evidence" value="ECO:0007669"/>
    <property type="project" value="TreeGrafter"/>
</dbReference>
<dbReference type="GO" id="GO:0051539">
    <property type="term" value="F:4 iron, 4 sulfur cluster binding"/>
    <property type="evidence" value="ECO:0007669"/>
    <property type="project" value="UniProtKB-UniRule"/>
</dbReference>
<dbReference type="GO" id="GO:0035599">
    <property type="term" value="F:aspartic acid methylthiotransferase activity"/>
    <property type="evidence" value="ECO:0007669"/>
    <property type="project" value="TreeGrafter"/>
</dbReference>
<dbReference type="GO" id="GO:0046872">
    <property type="term" value="F:metal ion binding"/>
    <property type="evidence" value="ECO:0007669"/>
    <property type="project" value="UniProtKB-KW"/>
</dbReference>
<dbReference type="GO" id="GO:0103039">
    <property type="term" value="F:protein methylthiotransferase activity"/>
    <property type="evidence" value="ECO:0007669"/>
    <property type="project" value="UniProtKB-EC"/>
</dbReference>
<dbReference type="GO" id="GO:0006400">
    <property type="term" value="P:tRNA modification"/>
    <property type="evidence" value="ECO:0007669"/>
    <property type="project" value="InterPro"/>
</dbReference>
<dbReference type="CDD" id="cd01335">
    <property type="entry name" value="Radical_SAM"/>
    <property type="match status" value="1"/>
</dbReference>
<dbReference type="FunFam" id="3.40.50.12160:FF:000002">
    <property type="entry name" value="Ribosomal protein S12 methylthiotransferase RimO"/>
    <property type="match status" value="1"/>
</dbReference>
<dbReference type="FunFam" id="3.80.30.20:FF:000001">
    <property type="entry name" value="tRNA-2-methylthio-N(6)-dimethylallyladenosine synthase 2"/>
    <property type="match status" value="1"/>
</dbReference>
<dbReference type="Gene3D" id="3.40.50.12160">
    <property type="entry name" value="Methylthiotransferase, N-terminal domain"/>
    <property type="match status" value="1"/>
</dbReference>
<dbReference type="Gene3D" id="2.40.50.140">
    <property type="entry name" value="Nucleic acid-binding proteins"/>
    <property type="match status" value="1"/>
</dbReference>
<dbReference type="Gene3D" id="3.80.30.20">
    <property type="entry name" value="tm_1862 like domain"/>
    <property type="match status" value="1"/>
</dbReference>
<dbReference type="HAMAP" id="MF_01865">
    <property type="entry name" value="MTTase_RimO"/>
    <property type="match status" value="1"/>
</dbReference>
<dbReference type="InterPro" id="IPR006638">
    <property type="entry name" value="Elp3/MiaA/NifB-like_rSAM"/>
</dbReference>
<dbReference type="InterPro" id="IPR005839">
    <property type="entry name" value="Methylthiotransferase"/>
</dbReference>
<dbReference type="InterPro" id="IPR020612">
    <property type="entry name" value="Methylthiotransferase_CS"/>
</dbReference>
<dbReference type="InterPro" id="IPR013848">
    <property type="entry name" value="Methylthiotransferase_N"/>
</dbReference>
<dbReference type="InterPro" id="IPR038135">
    <property type="entry name" value="Methylthiotransferase_N_sf"/>
</dbReference>
<dbReference type="InterPro" id="IPR012340">
    <property type="entry name" value="NA-bd_OB-fold"/>
</dbReference>
<dbReference type="InterPro" id="IPR005840">
    <property type="entry name" value="Ribosomal_uS12_MeSTrfase_RimO"/>
</dbReference>
<dbReference type="InterPro" id="IPR007197">
    <property type="entry name" value="rSAM"/>
</dbReference>
<dbReference type="InterPro" id="IPR023404">
    <property type="entry name" value="rSAM_horseshoe"/>
</dbReference>
<dbReference type="InterPro" id="IPR002792">
    <property type="entry name" value="TRAM_dom"/>
</dbReference>
<dbReference type="NCBIfam" id="TIGR01125">
    <property type="entry name" value="30S ribosomal protein S12 methylthiotransferase RimO"/>
    <property type="match status" value="1"/>
</dbReference>
<dbReference type="NCBIfam" id="TIGR00089">
    <property type="entry name" value="MiaB/RimO family radical SAM methylthiotransferase"/>
    <property type="match status" value="1"/>
</dbReference>
<dbReference type="PANTHER" id="PTHR43837">
    <property type="entry name" value="RIBOSOMAL PROTEIN S12 METHYLTHIOTRANSFERASE RIMO"/>
    <property type="match status" value="1"/>
</dbReference>
<dbReference type="PANTHER" id="PTHR43837:SF1">
    <property type="entry name" value="RIBOSOMAL PROTEIN US12 METHYLTHIOTRANSFERASE RIMO"/>
    <property type="match status" value="1"/>
</dbReference>
<dbReference type="Pfam" id="PF04055">
    <property type="entry name" value="Radical_SAM"/>
    <property type="match status" value="1"/>
</dbReference>
<dbReference type="Pfam" id="PF18693">
    <property type="entry name" value="TRAM_2"/>
    <property type="match status" value="1"/>
</dbReference>
<dbReference type="Pfam" id="PF00919">
    <property type="entry name" value="UPF0004"/>
    <property type="match status" value="1"/>
</dbReference>
<dbReference type="SFLD" id="SFLDG01082">
    <property type="entry name" value="B12-binding_domain_containing"/>
    <property type="match status" value="1"/>
</dbReference>
<dbReference type="SFLD" id="SFLDG01061">
    <property type="entry name" value="methylthiotransferase"/>
    <property type="match status" value="1"/>
</dbReference>
<dbReference type="SFLD" id="SFLDF00274">
    <property type="entry name" value="ribosomal_protein_S12_methylth"/>
    <property type="match status" value="1"/>
</dbReference>
<dbReference type="SMART" id="SM00729">
    <property type="entry name" value="Elp3"/>
    <property type="match status" value="1"/>
</dbReference>
<dbReference type="SUPFAM" id="SSF102114">
    <property type="entry name" value="Radical SAM enzymes"/>
    <property type="match status" value="1"/>
</dbReference>
<dbReference type="PROSITE" id="PS51449">
    <property type="entry name" value="MTTASE_N"/>
    <property type="match status" value="1"/>
</dbReference>
<dbReference type="PROSITE" id="PS01278">
    <property type="entry name" value="MTTASE_RADICAL"/>
    <property type="match status" value="1"/>
</dbReference>
<dbReference type="PROSITE" id="PS51918">
    <property type="entry name" value="RADICAL_SAM"/>
    <property type="match status" value="1"/>
</dbReference>
<dbReference type="PROSITE" id="PS50926">
    <property type="entry name" value="TRAM"/>
    <property type="match status" value="1"/>
</dbReference>
<reference key="1">
    <citation type="journal article" date="2010" name="PLoS ONE">
        <title>The complete multipartite genome sequence of Cupriavidus necator JMP134, a versatile pollutant degrader.</title>
        <authorList>
            <person name="Lykidis A."/>
            <person name="Perez-Pantoja D."/>
            <person name="Ledger T."/>
            <person name="Mavromatis K."/>
            <person name="Anderson I.J."/>
            <person name="Ivanova N.N."/>
            <person name="Hooper S.D."/>
            <person name="Lapidus A."/>
            <person name="Lucas S."/>
            <person name="Gonzalez B."/>
            <person name="Kyrpides N.C."/>
        </authorList>
    </citation>
    <scope>NUCLEOTIDE SEQUENCE [LARGE SCALE GENOMIC DNA]</scope>
    <source>
        <strain>JMP134 / LMG 1197</strain>
    </source>
</reference>
<protein>
    <recommendedName>
        <fullName evidence="1">Ribosomal protein uS12 methylthiotransferase RimO</fullName>
        <shortName evidence="1">uS12 MTTase</shortName>
        <shortName evidence="1">uS12 methylthiotransferase</shortName>
        <ecNumber evidence="1">2.8.4.4</ecNumber>
    </recommendedName>
    <alternativeName>
        <fullName evidence="1">Ribosomal protein uS12 (aspartate-C(3))-methylthiotransferase</fullName>
    </alternativeName>
    <alternativeName>
        <fullName evidence="1">Ribosome maturation factor RimO</fullName>
    </alternativeName>
</protein>
<organism>
    <name type="scientific">Cupriavidus pinatubonensis (strain JMP 134 / LMG 1197)</name>
    <name type="common">Cupriavidus necator (strain JMP 134)</name>
    <dbReference type="NCBI Taxonomy" id="264198"/>
    <lineage>
        <taxon>Bacteria</taxon>
        <taxon>Pseudomonadati</taxon>
        <taxon>Pseudomonadota</taxon>
        <taxon>Betaproteobacteria</taxon>
        <taxon>Burkholderiales</taxon>
        <taxon>Burkholderiaceae</taxon>
        <taxon>Cupriavidus</taxon>
    </lineage>
</organism>
<gene>
    <name evidence="1" type="primary">rimO</name>
    <name type="ordered locus">Reut_A1352</name>
</gene>
<proteinExistence type="inferred from homology"/>
<comment type="function">
    <text evidence="1">Catalyzes the methylthiolation of an aspartic acid residue of ribosomal protein uS12.</text>
</comment>
<comment type="catalytic activity">
    <reaction evidence="1">
        <text>L-aspartate(89)-[ribosomal protein uS12]-hydrogen + (sulfur carrier)-SH + AH2 + 2 S-adenosyl-L-methionine = 3-methylsulfanyl-L-aspartate(89)-[ribosomal protein uS12]-hydrogen + (sulfur carrier)-H + 5'-deoxyadenosine + L-methionine + A + S-adenosyl-L-homocysteine + 2 H(+)</text>
        <dbReference type="Rhea" id="RHEA:37087"/>
        <dbReference type="Rhea" id="RHEA-COMP:10460"/>
        <dbReference type="Rhea" id="RHEA-COMP:10461"/>
        <dbReference type="Rhea" id="RHEA-COMP:14737"/>
        <dbReference type="Rhea" id="RHEA-COMP:14739"/>
        <dbReference type="ChEBI" id="CHEBI:13193"/>
        <dbReference type="ChEBI" id="CHEBI:15378"/>
        <dbReference type="ChEBI" id="CHEBI:17319"/>
        <dbReference type="ChEBI" id="CHEBI:17499"/>
        <dbReference type="ChEBI" id="CHEBI:29917"/>
        <dbReference type="ChEBI" id="CHEBI:29961"/>
        <dbReference type="ChEBI" id="CHEBI:57844"/>
        <dbReference type="ChEBI" id="CHEBI:57856"/>
        <dbReference type="ChEBI" id="CHEBI:59789"/>
        <dbReference type="ChEBI" id="CHEBI:64428"/>
        <dbReference type="ChEBI" id="CHEBI:73599"/>
        <dbReference type="EC" id="2.8.4.4"/>
    </reaction>
</comment>
<comment type="cofactor">
    <cofactor evidence="1">
        <name>[4Fe-4S] cluster</name>
        <dbReference type="ChEBI" id="CHEBI:49883"/>
    </cofactor>
    <text evidence="1">Binds 2 [4Fe-4S] clusters. One cluster is coordinated with 3 cysteines and an exchangeable S-adenosyl-L-methionine.</text>
</comment>
<comment type="subcellular location">
    <subcellularLocation>
        <location evidence="1">Cytoplasm</location>
    </subcellularLocation>
</comment>
<comment type="similarity">
    <text evidence="1">Belongs to the methylthiotransferase family. RimO subfamily.</text>
</comment>
<sequence>MTQKDQSPRVGFVSLGCPKALVDSEQIITQLRAEGYAISGTYDGADLVVVNTCGFIDEAVQESLDAIGEALTENGKVIVTGCLGAKKDAAGHDIVSSVHPKVLAVTGPHALGEVMQAVHTHLPKPHDPFTDLVPAAGIKLTPKHYAYLKISEGCNHRCSFCIIPSMRGDLVSRPVAEVMLEAENLFKAGVKELLVISQDTSAYGVDVKYRTGFWNGRPLKTRMTELVAALGELAAQYGAWVRLHYVYPYPHVDEIIPLMNGGHVLPYLDVPLQHAHPDVLKRMKRPANAEKTLDRIRAWREVCPDLTIRSTFIAGFPGETEAEFETLLDFIAEAELDRVGCFAYSPVEGATANDLPGALPDEVREERRARFMEVAEEVSARRLQRKVGQTLRVLIDEVNQDGGIGRSSADAPEIDGLVYIAPPAKPSQRYRAGDFVQVKITGADGHDLWGEI</sequence>
<feature type="chain" id="PRO_0000374960" description="Ribosomal protein uS12 methylthiotransferase RimO">
    <location>
        <begin position="1"/>
        <end position="452"/>
    </location>
</feature>
<feature type="domain" description="MTTase N-terminal" evidence="1">
    <location>
        <begin position="8"/>
        <end position="123"/>
    </location>
</feature>
<feature type="domain" description="Radical SAM core" evidence="2">
    <location>
        <begin position="140"/>
        <end position="381"/>
    </location>
</feature>
<feature type="domain" description="TRAM" evidence="1">
    <location>
        <begin position="384"/>
        <end position="452"/>
    </location>
</feature>
<feature type="binding site" evidence="1">
    <location>
        <position position="17"/>
    </location>
    <ligand>
        <name>[4Fe-4S] cluster</name>
        <dbReference type="ChEBI" id="CHEBI:49883"/>
        <label>1</label>
    </ligand>
</feature>
<feature type="binding site" evidence="1">
    <location>
        <position position="53"/>
    </location>
    <ligand>
        <name>[4Fe-4S] cluster</name>
        <dbReference type="ChEBI" id="CHEBI:49883"/>
        <label>1</label>
    </ligand>
</feature>
<feature type="binding site" evidence="1">
    <location>
        <position position="82"/>
    </location>
    <ligand>
        <name>[4Fe-4S] cluster</name>
        <dbReference type="ChEBI" id="CHEBI:49883"/>
        <label>1</label>
    </ligand>
</feature>
<feature type="binding site" evidence="1">
    <location>
        <position position="154"/>
    </location>
    <ligand>
        <name>[4Fe-4S] cluster</name>
        <dbReference type="ChEBI" id="CHEBI:49883"/>
        <label>2</label>
        <note>4Fe-4S-S-AdoMet</note>
    </ligand>
</feature>
<feature type="binding site" evidence="1">
    <location>
        <position position="158"/>
    </location>
    <ligand>
        <name>[4Fe-4S] cluster</name>
        <dbReference type="ChEBI" id="CHEBI:49883"/>
        <label>2</label>
        <note>4Fe-4S-S-AdoMet</note>
    </ligand>
</feature>
<feature type="binding site" evidence="1">
    <location>
        <position position="161"/>
    </location>
    <ligand>
        <name>[4Fe-4S] cluster</name>
        <dbReference type="ChEBI" id="CHEBI:49883"/>
        <label>2</label>
        <note>4Fe-4S-S-AdoMet</note>
    </ligand>
</feature>
<name>RIMO_CUPPJ</name>
<keyword id="KW-0004">4Fe-4S</keyword>
<keyword id="KW-0963">Cytoplasm</keyword>
<keyword id="KW-0408">Iron</keyword>
<keyword id="KW-0411">Iron-sulfur</keyword>
<keyword id="KW-0479">Metal-binding</keyword>
<keyword id="KW-0949">S-adenosyl-L-methionine</keyword>
<keyword id="KW-0808">Transferase</keyword>
<evidence type="ECO:0000255" key="1">
    <source>
        <dbReference type="HAMAP-Rule" id="MF_01865"/>
    </source>
</evidence>
<evidence type="ECO:0000255" key="2">
    <source>
        <dbReference type="PROSITE-ProRule" id="PRU01266"/>
    </source>
</evidence>